<feature type="chain" id="PRO_0000095271" description="Adenylosuccinate synthetase">
    <location>
        <begin position="1"/>
        <end position="345"/>
    </location>
</feature>
<feature type="active site" description="Proton acceptor" evidence="1">
    <location>
        <position position="19"/>
    </location>
</feature>
<feature type="active site" description="Proton donor" evidence="1">
    <location>
        <position position="49"/>
    </location>
</feature>
<feature type="binding site" evidence="1">
    <location>
        <begin position="18"/>
        <end position="24"/>
    </location>
    <ligand>
        <name>GTP</name>
        <dbReference type="ChEBI" id="CHEBI:37565"/>
    </ligand>
</feature>
<feature type="binding site" description="in other chain" evidence="1">
    <location>
        <begin position="19"/>
        <end position="22"/>
    </location>
    <ligand>
        <name>IMP</name>
        <dbReference type="ChEBI" id="CHEBI:58053"/>
        <note>ligand shared between dimeric partners</note>
    </ligand>
</feature>
<feature type="binding site" evidence="1">
    <location>
        <position position="19"/>
    </location>
    <ligand>
        <name>Mg(2+)</name>
        <dbReference type="ChEBI" id="CHEBI:18420"/>
    </ligand>
</feature>
<feature type="binding site" description="in other chain" evidence="1">
    <location>
        <begin position="46"/>
        <end position="49"/>
    </location>
    <ligand>
        <name>IMP</name>
        <dbReference type="ChEBI" id="CHEBI:58053"/>
        <note>ligand shared between dimeric partners</note>
    </ligand>
</feature>
<feature type="binding site" evidence="1">
    <location>
        <begin position="48"/>
        <end position="50"/>
    </location>
    <ligand>
        <name>GTP</name>
        <dbReference type="ChEBI" id="CHEBI:37565"/>
    </ligand>
</feature>
<feature type="binding site" evidence="1">
    <location>
        <position position="48"/>
    </location>
    <ligand>
        <name>Mg(2+)</name>
        <dbReference type="ChEBI" id="CHEBI:18420"/>
    </ligand>
</feature>
<feature type="binding site" description="in other chain" evidence="1">
    <location>
        <position position="133"/>
    </location>
    <ligand>
        <name>IMP</name>
        <dbReference type="ChEBI" id="CHEBI:58053"/>
        <note>ligand shared between dimeric partners</note>
    </ligand>
</feature>
<feature type="binding site" evidence="1">
    <location>
        <position position="147"/>
    </location>
    <ligand>
        <name>IMP</name>
        <dbReference type="ChEBI" id="CHEBI:58053"/>
        <note>ligand shared between dimeric partners</note>
    </ligand>
</feature>
<feature type="binding site" description="in other chain" evidence="1">
    <location>
        <position position="185"/>
    </location>
    <ligand>
        <name>IMP</name>
        <dbReference type="ChEBI" id="CHEBI:58053"/>
        <note>ligand shared between dimeric partners</note>
    </ligand>
</feature>
<feature type="binding site" description="in other chain" evidence="1">
    <location>
        <position position="200"/>
    </location>
    <ligand>
        <name>IMP</name>
        <dbReference type="ChEBI" id="CHEBI:58053"/>
        <note>ligand shared between dimeric partners</note>
    </ligand>
</feature>
<feature type="binding site" evidence="1">
    <location>
        <begin position="258"/>
        <end position="264"/>
    </location>
    <ligand>
        <name>substrate</name>
    </ligand>
</feature>
<feature type="binding site" description="in other chain" evidence="1">
    <location>
        <position position="262"/>
    </location>
    <ligand>
        <name>IMP</name>
        <dbReference type="ChEBI" id="CHEBI:58053"/>
        <note>ligand shared between dimeric partners</note>
    </ligand>
</feature>
<feature type="binding site" evidence="1">
    <location>
        <position position="264"/>
    </location>
    <ligand>
        <name>GTP</name>
        <dbReference type="ChEBI" id="CHEBI:37565"/>
    </ligand>
</feature>
<feature type="binding site" evidence="1">
    <location>
        <begin position="290"/>
        <end position="292"/>
    </location>
    <ligand>
        <name>GTP</name>
        <dbReference type="ChEBI" id="CHEBI:37565"/>
    </ligand>
</feature>
<feature type="binding site" evidence="1">
    <location>
        <begin position="330"/>
        <end position="332"/>
    </location>
    <ligand>
        <name>GTP</name>
        <dbReference type="ChEBI" id="CHEBI:37565"/>
    </ligand>
</feature>
<evidence type="ECO:0000255" key="1">
    <source>
        <dbReference type="HAMAP-Rule" id="MF_00011"/>
    </source>
</evidence>
<proteinExistence type="inferred from homology"/>
<gene>
    <name evidence="1" type="primary">purA</name>
    <name type="ordered locus">MJ0561</name>
</gene>
<reference key="1">
    <citation type="journal article" date="1996" name="Science">
        <title>Complete genome sequence of the methanogenic archaeon, Methanococcus jannaschii.</title>
        <authorList>
            <person name="Bult C.J."/>
            <person name="White O."/>
            <person name="Olsen G.J."/>
            <person name="Zhou L."/>
            <person name="Fleischmann R.D."/>
            <person name="Sutton G.G."/>
            <person name="Blake J.A."/>
            <person name="FitzGerald L.M."/>
            <person name="Clayton R.A."/>
            <person name="Gocayne J.D."/>
            <person name="Kerlavage A.R."/>
            <person name="Dougherty B.A."/>
            <person name="Tomb J.-F."/>
            <person name="Adams M.D."/>
            <person name="Reich C.I."/>
            <person name="Overbeek R."/>
            <person name="Kirkness E.F."/>
            <person name="Weinstock K.G."/>
            <person name="Merrick J.M."/>
            <person name="Glodek A."/>
            <person name="Scott J.L."/>
            <person name="Geoghagen N.S.M."/>
            <person name="Weidman J.F."/>
            <person name="Fuhrmann J.L."/>
            <person name="Nguyen D."/>
            <person name="Utterback T.R."/>
            <person name="Kelley J.M."/>
            <person name="Peterson J.D."/>
            <person name="Sadow P.W."/>
            <person name="Hanna M.C."/>
            <person name="Cotton M.D."/>
            <person name="Roberts K.M."/>
            <person name="Hurst M.A."/>
            <person name="Kaine B.P."/>
            <person name="Borodovsky M."/>
            <person name="Klenk H.-P."/>
            <person name="Fraser C.M."/>
            <person name="Smith H.O."/>
            <person name="Woese C.R."/>
            <person name="Venter J.C."/>
        </authorList>
    </citation>
    <scope>NUCLEOTIDE SEQUENCE [LARGE SCALE GENOMIC DNA]</scope>
    <source>
        <strain>ATCC 43067 / DSM 2661 / JAL-1 / JCM 10045 / NBRC 100440</strain>
    </source>
</reference>
<protein>
    <recommendedName>
        <fullName evidence="1">Adenylosuccinate synthetase</fullName>
        <shortName evidence="1">AMPSase</shortName>
        <shortName evidence="1">AdSS</shortName>
        <ecNumber evidence="1">6.3.4.4</ecNumber>
    </recommendedName>
    <alternativeName>
        <fullName evidence="1">IMP--aspartate ligase</fullName>
    </alternativeName>
</protein>
<keyword id="KW-0963">Cytoplasm</keyword>
<keyword id="KW-0342">GTP-binding</keyword>
<keyword id="KW-0436">Ligase</keyword>
<keyword id="KW-0460">Magnesium</keyword>
<keyword id="KW-0479">Metal-binding</keyword>
<keyword id="KW-0547">Nucleotide-binding</keyword>
<keyword id="KW-0658">Purine biosynthesis</keyword>
<keyword id="KW-1185">Reference proteome</keyword>
<sequence length="345" mass="37820">MKKVVLLTCTIIVGGQWGDEGKGKIISYICDKDKPSIIARGGVGPNAGHTVNIGGKSYGIRMIPTGFPYKEAKLAIGAGVLVDPEVLLKEVEMLKDFNVKERLIVDYRCGIIEEKHKIMDRKDEHLAKEIGTTGSGCGPANVDRVLRILKQAKDIEELKEFLGDVSEEVNNALDRGENVLIEGTQGTLLSLYYGTYPYVTSKDTTASSFAADVGIGPTKVDEVIVVFKTFPTRVGAGPFPTEMSLEEAESLGIVEYGTVTGRRRRVGYFDFELARKACRLNGATQIALTGLDKYDKECYGVTEYNKLSEKAKEFINKIEEVTGVPVTIISTGPEMHQTIDLRNEL</sequence>
<organism>
    <name type="scientific">Methanocaldococcus jannaschii (strain ATCC 43067 / DSM 2661 / JAL-1 / JCM 10045 / NBRC 100440)</name>
    <name type="common">Methanococcus jannaschii</name>
    <dbReference type="NCBI Taxonomy" id="243232"/>
    <lineage>
        <taxon>Archaea</taxon>
        <taxon>Methanobacteriati</taxon>
        <taxon>Methanobacteriota</taxon>
        <taxon>Methanomada group</taxon>
        <taxon>Methanococci</taxon>
        <taxon>Methanococcales</taxon>
        <taxon>Methanocaldococcaceae</taxon>
        <taxon>Methanocaldococcus</taxon>
    </lineage>
</organism>
<name>PURA_METJA</name>
<dbReference type="EC" id="6.3.4.4" evidence="1"/>
<dbReference type="EMBL" id="L77117">
    <property type="protein sequence ID" value="AAB98554.1"/>
    <property type="molecule type" value="Genomic_DNA"/>
</dbReference>
<dbReference type="PIR" id="A64370">
    <property type="entry name" value="A64370"/>
</dbReference>
<dbReference type="SMR" id="Q57981"/>
<dbReference type="FunCoup" id="Q57981">
    <property type="interactions" value="323"/>
</dbReference>
<dbReference type="STRING" id="243232.MJ_0561"/>
<dbReference type="PaxDb" id="243232-MJ_0561"/>
<dbReference type="EnsemblBacteria" id="AAB98554">
    <property type="protein sequence ID" value="AAB98554"/>
    <property type="gene ID" value="MJ_0561"/>
</dbReference>
<dbReference type="KEGG" id="mja:MJ_0561"/>
<dbReference type="eggNOG" id="arCOG04387">
    <property type="taxonomic scope" value="Archaea"/>
</dbReference>
<dbReference type="HOGENOM" id="CLU_029848_0_0_2"/>
<dbReference type="InParanoid" id="Q57981"/>
<dbReference type="PhylomeDB" id="Q57981"/>
<dbReference type="BRENDA" id="6.3.4.4">
    <property type="organism ID" value="3260"/>
</dbReference>
<dbReference type="UniPathway" id="UPA00075">
    <property type="reaction ID" value="UER00335"/>
</dbReference>
<dbReference type="Proteomes" id="UP000000805">
    <property type="component" value="Chromosome"/>
</dbReference>
<dbReference type="GO" id="GO:0005737">
    <property type="term" value="C:cytoplasm"/>
    <property type="evidence" value="ECO:0000318"/>
    <property type="project" value="GO_Central"/>
</dbReference>
<dbReference type="GO" id="GO:0004019">
    <property type="term" value="F:adenylosuccinate synthase activity"/>
    <property type="evidence" value="ECO:0000318"/>
    <property type="project" value="GO_Central"/>
</dbReference>
<dbReference type="GO" id="GO:0005525">
    <property type="term" value="F:GTP binding"/>
    <property type="evidence" value="ECO:0007669"/>
    <property type="project" value="UniProtKB-UniRule"/>
</dbReference>
<dbReference type="GO" id="GO:0000287">
    <property type="term" value="F:magnesium ion binding"/>
    <property type="evidence" value="ECO:0007669"/>
    <property type="project" value="UniProtKB-UniRule"/>
</dbReference>
<dbReference type="GO" id="GO:0044208">
    <property type="term" value="P:'de novo' AMP biosynthetic process"/>
    <property type="evidence" value="ECO:0000318"/>
    <property type="project" value="GO_Central"/>
</dbReference>
<dbReference type="GO" id="GO:0046040">
    <property type="term" value="P:IMP metabolic process"/>
    <property type="evidence" value="ECO:0000318"/>
    <property type="project" value="GO_Central"/>
</dbReference>
<dbReference type="CDD" id="cd03108">
    <property type="entry name" value="AdSS"/>
    <property type="match status" value="1"/>
</dbReference>
<dbReference type="FunFam" id="3.40.440.10:FF:000007">
    <property type="entry name" value="Adenylosuccinate synthetase"/>
    <property type="match status" value="1"/>
</dbReference>
<dbReference type="Gene3D" id="3.40.440.10">
    <property type="entry name" value="Adenylosuccinate Synthetase, subunit A, domain 1"/>
    <property type="match status" value="2"/>
</dbReference>
<dbReference type="Gene3D" id="1.10.300.10">
    <property type="entry name" value="Adenylosuccinate Synthetase, subunit A, domain 2"/>
    <property type="match status" value="2"/>
</dbReference>
<dbReference type="Gene3D" id="3.90.170.10">
    <property type="entry name" value="Adenylosuccinate Synthetase, subunit A, domain 3"/>
    <property type="match status" value="2"/>
</dbReference>
<dbReference type="HAMAP" id="MF_00011">
    <property type="entry name" value="Adenylosucc_synth"/>
    <property type="match status" value="1"/>
</dbReference>
<dbReference type="InterPro" id="IPR018220">
    <property type="entry name" value="Adenylosuccin_syn_GTP-bd"/>
</dbReference>
<dbReference type="InterPro" id="IPR042109">
    <property type="entry name" value="Adenylosuccinate_synth_dom1"/>
</dbReference>
<dbReference type="InterPro" id="IPR042110">
    <property type="entry name" value="Adenylosuccinate_synth_dom2"/>
</dbReference>
<dbReference type="InterPro" id="IPR042111">
    <property type="entry name" value="Adenylosuccinate_synth_dom3"/>
</dbReference>
<dbReference type="InterPro" id="IPR001114">
    <property type="entry name" value="Adenylosuccinate_synthetase"/>
</dbReference>
<dbReference type="InterPro" id="IPR027417">
    <property type="entry name" value="P-loop_NTPase"/>
</dbReference>
<dbReference type="NCBIfam" id="NF003295">
    <property type="entry name" value="PRK04293.1"/>
    <property type="match status" value="1"/>
</dbReference>
<dbReference type="PANTHER" id="PTHR11846">
    <property type="entry name" value="ADENYLOSUCCINATE SYNTHETASE"/>
    <property type="match status" value="1"/>
</dbReference>
<dbReference type="PANTHER" id="PTHR11846:SF0">
    <property type="entry name" value="ADENYLOSUCCINATE SYNTHETASE"/>
    <property type="match status" value="1"/>
</dbReference>
<dbReference type="Pfam" id="PF00709">
    <property type="entry name" value="Adenylsucc_synt"/>
    <property type="match status" value="1"/>
</dbReference>
<dbReference type="SMART" id="SM00788">
    <property type="entry name" value="Adenylsucc_synt"/>
    <property type="match status" value="1"/>
</dbReference>
<dbReference type="SUPFAM" id="SSF52540">
    <property type="entry name" value="P-loop containing nucleoside triphosphate hydrolases"/>
    <property type="match status" value="1"/>
</dbReference>
<dbReference type="PROSITE" id="PS01266">
    <property type="entry name" value="ADENYLOSUCCIN_SYN_1"/>
    <property type="match status" value="1"/>
</dbReference>
<accession>Q57981</accession>
<comment type="function">
    <text evidence="1">Plays an important role in the de novo pathway of purine nucleotide biosynthesis. Catalyzes the first committed step in the biosynthesis of AMP from IMP.</text>
</comment>
<comment type="catalytic activity">
    <reaction evidence="1">
        <text>IMP + L-aspartate + GTP = N(6)-(1,2-dicarboxyethyl)-AMP + GDP + phosphate + 2 H(+)</text>
        <dbReference type="Rhea" id="RHEA:15753"/>
        <dbReference type="ChEBI" id="CHEBI:15378"/>
        <dbReference type="ChEBI" id="CHEBI:29991"/>
        <dbReference type="ChEBI" id="CHEBI:37565"/>
        <dbReference type="ChEBI" id="CHEBI:43474"/>
        <dbReference type="ChEBI" id="CHEBI:57567"/>
        <dbReference type="ChEBI" id="CHEBI:58053"/>
        <dbReference type="ChEBI" id="CHEBI:58189"/>
        <dbReference type="EC" id="6.3.4.4"/>
    </reaction>
</comment>
<comment type="cofactor">
    <cofactor evidence="1">
        <name>Mg(2+)</name>
        <dbReference type="ChEBI" id="CHEBI:18420"/>
    </cofactor>
    <text evidence="1">Binds 1 Mg(2+) ion per subunit.</text>
</comment>
<comment type="pathway">
    <text evidence="1">Purine metabolism; AMP biosynthesis via de novo pathway; AMP from IMP: step 1/2.</text>
</comment>
<comment type="subunit">
    <text evidence="1">Homodimer.</text>
</comment>
<comment type="subcellular location">
    <subcellularLocation>
        <location evidence="1">Cytoplasm</location>
    </subcellularLocation>
</comment>
<comment type="similarity">
    <text evidence="1">Belongs to the adenylosuccinate synthetase family.</text>
</comment>